<comment type="function">
    <text evidence="6">Probable component of an ion channel (Probable). Molecular function hasn't been characterized yet (Probable).</text>
</comment>
<comment type="subcellular location">
    <subcellularLocation>
        <location evidence="1">Membrane</location>
        <topology evidence="1">Multi-pass membrane protein</topology>
    </subcellularLocation>
</comment>
<comment type="alternative products">
    <event type="alternative splicing"/>
    <isoform>
        <id>Q7TQ69-1</id>
        <name evidence="3">1</name>
        <sequence type="displayed"/>
    </isoform>
    <isoform>
        <id>Q7TQ69-2</id>
        <name evidence="4">2</name>
        <sequence type="described" ref="VSP_052203 VSP_052204"/>
    </isoform>
</comment>
<comment type="tissue specificity">
    <text evidence="3">Detected in most neuronal organs and also in some non-neuronal tissues.</text>
</comment>
<comment type="similarity">
    <text evidence="1">Belongs to the TMC family.</text>
</comment>
<proteinExistence type="evidence at transcript level"/>
<protein>
    <recommendedName>
        <fullName>Transmembrane channel-like protein 3</fullName>
    </recommendedName>
</protein>
<name>TMC3_MOUSE</name>
<dbReference type="EMBL" id="AY263157">
    <property type="protein sequence ID" value="AAP78772.1"/>
    <property type="molecule type" value="mRNA"/>
</dbReference>
<dbReference type="EMBL" id="AY236491">
    <property type="protein sequence ID" value="AAP69869.1"/>
    <property type="molecule type" value="mRNA"/>
</dbReference>
<dbReference type="CCDS" id="CCDS40012.1">
    <molecule id="Q7TQ69-1"/>
</dbReference>
<dbReference type="RefSeq" id="NP_808363.3">
    <property type="nucleotide sequence ID" value="NM_177695.4"/>
</dbReference>
<dbReference type="SMR" id="Q7TQ69"/>
<dbReference type="STRING" id="10090.ENSMUSP00000046028"/>
<dbReference type="TCDB" id="1.A.17.4.12">
    <property type="family name" value="the calcium-dependent chloride channel (ca-clc) family"/>
</dbReference>
<dbReference type="GlyCosmos" id="Q7TQ69">
    <property type="glycosylation" value="1 site, No reported glycans"/>
</dbReference>
<dbReference type="GlyGen" id="Q7TQ69">
    <property type="glycosylation" value="2 sites"/>
</dbReference>
<dbReference type="iPTMnet" id="Q7TQ69"/>
<dbReference type="PhosphoSitePlus" id="Q7TQ69"/>
<dbReference type="jPOST" id="Q7TQ69"/>
<dbReference type="PaxDb" id="10090-ENSMUSP00000046028"/>
<dbReference type="ProteomicsDB" id="259121">
    <molecule id="Q7TQ69-1"/>
</dbReference>
<dbReference type="ProteomicsDB" id="259122">
    <molecule id="Q7TQ69-2"/>
</dbReference>
<dbReference type="DNASU" id="233424"/>
<dbReference type="GeneID" id="233424"/>
<dbReference type="KEGG" id="mmu:233424"/>
<dbReference type="AGR" id="MGI:2669033"/>
<dbReference type="CTD" id="342125"/>
<dbReference type="MGI" id="MGI:2669033">
    <property type="gene designation" value="Tmc3"/>
</dbReference>
<dbReference type="eggNOG" id="ENOG502QQGX">
    <property type="taxonomic scope" value="Eukaryota"/>
</dbReference>
<dbReference type="InParanoid" id="Q7TQ69"/>
<dbReference type="OrthoDB" id="5831905at2759"/>
<dbReference type="PhylomeDB" id="Q7TQ69"/>
<dbReference type="BioGRID-ORCS" id="233424">
    <property type="hits" value="0 hits in 59 CRISPR screens"/>
</dbReference>
<dbReference type="PRO" id="PR:Q7TQ69"/>
<dbReference type="Proteomes" id="UP000000589">
    <property type="component" value="Unplaced"/>
</dbReference>
<dbReference type="RNAct" id="Q7TQ69">
    <property type="molecule type" value="protein"/>
</dbReference>
<dbReference type="GO" id="GO:0005886">
    <property type="term" value="C:plasma membrane"/>
    <property type="evidence" value="ECO:0007669"/>
    <property type="project" value="InterPro"/>
</dbReference>
<dbReference type="InterPro" id="IPR038900">
    <property type="entry name" value="TMC"/>
</dbReference>
<dbReference type="InterPro" id="IPR012496">
    <property type="entry name" value="TMC_dom"/>
</dbReference>
<dbReference type="PANTHER" id="PTHR23302:SF35">
    <property type="entry name" value="TRANSMEMBRANE CHANNEL-LIKE PROTEIN 3"/>
    <property type="match status" value="1"/>
</dbReference>
<dbReference type="PANTHER" id="PTHR23302">
    <property type="entry name" value="TRANSMEMBRANE CHANNEL-RELATED"/>
    <property type="match status" value="1"/>
</dbReference>
<dbReference type="Pfam" id="PF07810">
    <property type="entry name" value="TMC"/>
    <property type="match status" value="1"/>
</dbReference>
<reference evidence="6 8" key="1">
    <citation type="journal article" date="2003" name="BMC Genomics">
        <title>TMC and EVER genes belong to a larger novel family, the TMC gene family encoding transmembrane proteins.</title>
        <authorList>
            <person name="Keresztes G."/>
            <person name="Mutai H."/>
            <person name="Heller S."/>
        </authorList>
    </citation>
    <scope>NUCLEOTIDE SEQUENCE [MRNA] (ISOFORM 1)</scope>
    <scope>TISSUE SPECIFICITY</scope>
    <source>
        <strain evidence="8">C57BL/6J</strain>
    </source>
</reference>
<reference evidence="6 7" key="2">
    <citation type="journal article" date="2003" name="Genomics">
        <title>Characterization of the transmembrane channel-like (TMC) gene family: functional clues from hearing loss and epidermodysplasia verruciformis.</title>
        <authorList>
            <person name="Kurima K."/>
            <person name="Yang Y."/>
            <person name="Sorber K."/>
            <person name="Griffith A.J."/>
        </authorList>
    </citation>
    <scope>NUCLEOTIDE SEQUENCE [MRNA] (ISOFORM 2)</scope>
</reference>
<gene>
    <name evidence="8 9" type="primary">Tmc3</name>
</gene>
<organism>
    <name type="scientific">Mus musculus</name>
    <name type="common">Mouse</name>
    <dbReference type="NCBI Taxonomy" id="10090"/>
    <lineage>
        <taxon>Eukaryota</taxon>
        <taxon>Metazoa</taxon>
        <taxon>Chordata</taxon>
        <taxon>Craniata</taxon>
        <taxon>Vertebrata</taxon>
        <taxon>Euteleostomi</taxon>
        <taxon>Mammalia</taxon>
        <taxon>Eutheria</taxon>
        <taxon>Euarchontoglires</taxon>
        <taxon>Glires</taxon>
        <taxon>Rodentia</taxon>
        <taxon>Myomorpha</taxon>
        <taxon>Muroidea</taxon>
        <taxon>Muridae</taxon>
        <taxon>Murinae</taxon>
        <taxon>Mus</taxon>
        <taxon>Mus</taxon>
    </lineage>
</organism>
<keyword id="KW-0025">Alternative splicing</keyword>
<keyword id="KW-0325">Glycoprotein</keyword>
<keyword id="KW-0472">Membrane</keyword>
<keyword id="KW-1185">Reference proteome</keyword>
<keyword id="KW-0812">Transmembrane</keyword>
<keyword id="KW-1133">Transmembrane helix</keyword>
<evidence type="ECO:0000255" key="1"/>
<evidence type="ECO:0000256" key="2">
    <source>
        <dbReference type="SAM" id="MobiDB-lite"/>
    </source>
</evidence>
<evidence type="ECO:0000269" key="3">
    <source>
    </source>
</evidence>
<evidence type="ECO:0000269" key="4">
    <source>
    </source>
</evidence>
<evidence type="ECO:0000303" key="5">
    <source>
    </source>
</evidence>
<evidence type="ECO:0000305" key="6"/>
<evidence type="ECO:0000312" key="7">
    <source>
        <dbReference type="EMBL" id="AAP69869.1"/>
    </source>
</evidence>
<evidence type="ECO:0000312" key="8">
    <source>
        <dbReference type="EMBL" id="AAP78772.1"/>
    </source>
</evidence>
<evidence type="ECO:0000312" key="9">
    <source>
        <dbReference type="MGI" id="MGI:2669033"/>
    </source>
</evidence>
<feature type="chain" id="PRO_0000259603" description="Transmembrane channel-like protein 3">
    <location>
        <begin position="1"/>
        <end position="1130"/>
    </location>
</feature>
<feature type="topological domain" description="Cytoplasmic" evidence="1">
    <location>
        <begin position="1"/>
        <end position="148"/>
    </location>
</feature>
<feature type="transmembrane region" description="Helical" evidence="1">
    <location>
        <begin position="149"/>
        <end position="169"/>
    </location>
</feature>
<feature type="topological domain" description="Extracellular" evidence="1">
    <location>
        <begin position="170"/>
        <end position="192"/>
    </location>
</feature>
<feature type="transmembrane region" description="Helical" evidence="1">
    <location>
        <begin position="193"/>
        <end position="213"/>
    </location>
</feature>
<feature type="topological domain" description="Cytoplasmic" evidence="1">
    <location>
        <begin position="214"/>
        <end position="225"/>
    </location>
</feature>
<feature type="transmembrane region" description="Helical" evidence="1">
    <location>
        <begin position="226"/>
        <end position="246"/>
    </location>
</feature>
<feature type="topological domain" description="Extracellular" evidence="1">
    <location>
        <begin position="247"/>
        <end position="319"/>
    </location>
</feature>
<feature type="transmembrane region" description="Helical" evidence="1">
    <location>
        <begin position="320"/>
        <end position="340"/>
    </location>
</feature>
<feature type="topological domain" description="Cytoplasmic" evidence="1">
    <location>
        <begin position="341"/>
        <end position="361"/>
    </location>
</feature>
<feature type="transmembrane region" description="Helical" evidence="1">
    <location>
        <begin position="362"/>
        <end position="382"/>
    </location>
</feature>
<feature type="topological domain" description="Extracellular" evidence="1">
    <location>
        <begin position="383"/>
        <end position="393"/>
    </location>
</feature>
<feature type="transmembrane region" description="Helical" evidence="1">
    <location>
        <begin position="394"/>
        <end position="414"/>
    </location>
</feature>
<feature type="topological domain" description="Cytoplasmic" evidence="1">
    <location>
        <begin position="415"/>
        <end position="509"/>
    </location>
</feature>
<feature type="transmembrane region" description="Helical" evidence="1">
    <location>
        <begin position="510"/>
        <end position="530"/>
    </location>
</feature>
<feature type="topological domain" description="Extracellular" evidence="1">
    <location>
        <begin position="531"/>
        <end position="570"/>
    </location>
</feature>
<feature type="transmembrane region" description="Helical" evidence="1">
    <location>
        <begin position="571"/>
        <end position="591"/>
    </location>
</feature>
<feature type="topological domain" description="Cytoplasmic" evidence="1">
    <location>
        <begin position="592"/>
        <end position="619"/>
    </location>
</feature>
<feature type="transmembrane region" description="Helical" evidence="1">
    <location>
        <begin position="620"/>
        <end position="640"/>
    </location>
</feature>
<feature type="topological domain" description="Extracellular" evidence="1">
    <location>
        <begin position="641"/>
        <end position="680"/>
    </location>
</feature>
<feature type="transmembrane region" description="Helical" evidence="1">
    <location>
        <begin position="681"/>
        <end position="701"/>
    </location>
</feature>
<feature type="topological domain" description="Cytoplasmic" evidence="1">
    <location>
        <begin position="702"/>
        <end position="1130"/>
    </location>
</feature>
<feature type="region of interest" description="Disordered" evidence="2">
    <location>
        <begin position="742"/>
        <end position="774"/>
    </location>
</feature>
<feature type="region of interest" description="Disordered" evidence="2">
    <location>
        <begin position="819"/>
        <end position="893"/>
    </location>
</feature>
<feature type="region of interest" description="Disordered" evidence="2">
    <location>
        <begin position="999"/>
        <end position="1019"/>
    </location>
</feature>
<feature type="region of interest" description="Disordered" evidence="2">
    <location>
        <begin position="1033"/>
        <end position="1059"/>
    </location>
</feature>
<feature type="region of interest" description="Disordered" evidence="2">
    <location>
        <begin position="1097"/>
        <end position="1116"/>
    </location>
</feature>
<feature type="compositionally biased region" description="Polar residues" evidence="2">
    <location>
        <begin position="747"/>
        <end position="767"/>
    </location>
</feature>
<feature type="compositionally biased region" description="Basic and acidic residues" evidence="2">
    <location>
        <begin position="840"/>
        <end position="850"/>
    </location>
</feature>
<feature type="compositionally biased region" description="Polar residues" evidence="2">
    <location>
        <begin position="856"/>
        <end position="876"/>
    </location>
</feature>
<feature type="compositionally biased region" description="Basic and acidic residues" evidence="2">
    <location>
        <begin position="878"/>
        <end position="890"/>
    </location>
</feature>
<feature type="compositionally biased region" description="Basic and acidic residues" evidence="2">
    <location>
        <begin position="1006"/>
        <end position="1017"/>
    </location>
</feature>
<feature type="compositionally biased region" description="Polar residues" evidence="2">
    <location>
        <begin position="1097"/>
        <end position="1106"/>
    </location>
</feature>
<feature type="glycosylation site" description="N-linked (GlcNAc...) asparagine" evidence="1">
    <location>
        <position position="264"/>
    </location>
</feature>
<feature type="splice variant" id="VSP_052203" description="In isoform 2." evidence="5">
    <original>RSE</original>
    <variation>SII</variation>
    <location>
        <begin position="723"/>
        <end position="725"/>
    </location>
</feature>
<feature type="splice variant" id="VSP_052204" description="In isoform 2." evidence="5">
    <location>
        <begin position="726"/>
        <end position="1130"/>
    </location>
</feature>
<feature type="sequence conflict" description="In Ref. 2; AAP69869." evidence="6" ref="2">
    <original>R</original>
    <variation>K</variation>
    <location>
        <position position="248"/>
    </location>
</feature>
<feature type="sequence conflict" description="In Ref. 2; AAP69869." evidence="6" ref="2">
    <original>P</original>
    <variation>L</variation>
    <location>
        <position position="551"/>
    </location>
</feature>
<feature type="sequence conflict" description="In Ref. 2; AAP69869." evidence="6" ref="2">
    <location>
        <position position="695"/>
    </location>
</feature>
<sequence>MKTSKASQRYRSIRRNASQCYLYQDSLLLGNSDDSFNADETGDSSDPEQIFQNIQFQKDLMANIRCRPWTMGQKLRALRRAKEIVLKFEGRLTRTRGYQAAGAELWRKFARLACNFVVIFIPWEMRIKKIESHFGSGVASYFIFLRWLFGINIVLTVMTGAFVVLPELIAGQPFGSTASKTIPREQITSAQDLDTVWSLGGYLQYSVLFYGYYGRERRIGRAGYRLPLAYFLVGMAVFAYSFIVLLKRMAKNSRTSLASASNENYTFCWRVFCAWDYLIGNPEAAESKTAAILNSIREAILEEQEKKKNKNMAVTVCLRIIANILVLLSLAGSIYLIYFVVDRSQKLEQSKKELTLWEKNEVSVVVSLVTMLAPSAFDLIAALEMYHPRTTLRFQLARVLVLYLGNLYSLIIALLDKVNSMNIEEAATKNITSHWADAPTFSATRTVPEEGQWPTPGSGAELRRNTSTWVVEETSFLTSITPHTKANKTVPYMQGPQGQCWETYVGQEMLKLSVIDMLFTVASILLIDFFRGLFVRYLSDYWCWDLESKFPEYGEFKIAENVLHLVYNQGMIWMGAFFSPCLPAFNVLKLIGLMYLRSWAVLTCNVPHQQVFRASRSNNFYLAMLLFMLFLCMLPTIFAIVHYKPSLNCGPFSGQEKIYDIVSETIENDFPTWFHAVVGHISSPVVILPAVLLLFMLIYYLQSIARSLKLSSQQLRMQIQNARSEDKKKVAQMVEALAIPSDARQAGSATEAESSENSKPKTLQARIQTHEESSKRLLKDSDLISQLSSVYMATSPNNGHMLNFDSLSSKSLRMEAITRSLPQSPGQGSRDPCSPLLDGSRSRPEQDTNRHPHRPCSSTSNLHKNRSCSSVTQTQPLKDVRSEPLSRKDFQPISPPFCGSGVSTLMTHDHSPRAPRYYVVNERDSHKKTHRAFWPERHFKIDALGDIVELYPRNVQQYMSWVPNQPCSPQLSEEEEEMLRRDLVQWSIPASSLTDLPRSSCFYTGDRSENNTRDPKYQRRVYYRSGDNSFEDQLERPTFVHRKPRSRNGQYPQHALKARVKAKFEPSFTESDSVSAASSSDHQNSNNDQYLHVMSSQGRFPRSASQLGRRKAKSRQVLPTDLNDLICSNV</sequence>
<accession>Q7TQ69</accession>
<accession>Q7TN63</accession>